<reference key="1">
    <citation type="journal article" date="2010" name="J. Bacteriol.">
        <title>Complete genome sequence of Beijerinckia indica subsp. indica.</title>
        <authorList>
            <person name="Tamas I."/>
            <person name="Dedysh S.N."/>
            <person name="Liesack W."/>
            <person name="Stott M.B."/>
            <person name="Alam M."/>
            <person name="Murrell J.C."/>
            <person name="Dunfield P.F."/>
        </authorList>
    </citation>
    <scope>NUCLEOTIDE SEQUENCE [LARGE SCALE GENOMIC DNA]</scope>
    <source>
        <strain>ATCC 9039 / DSM 1715 / NCIMB 8712</strain>
    </source>
</reference>
<gene>
    <name evidence="1" type="primary">mnmA</name>
    <name type="ordered locus">Bind_3037</name>
</gene>
<evidence type="ECO:0000255" key="1">
    <source>
        <dbReference type="HAMAP-Rule" id="MF_00144"/>
    </source>
</evidence>
<evidence type="ECO:0000256" key="2">
    <source>
        <dbReference type="SAM" id="MobiDB-lite"/>
    </source>
</evidence>
<sequence length="431" mass="46439">MELGSSDVTSSGLDHAGLNSLGLPKPPALTRVVVAMSGGVDSSVVAALLKREGYEVIGVTLQLYDHGEAVHRKGACCAGQDIQDARQVADQLGIPHYVLDYEERFRRKVIDPFAQSYATGETPIPCVSCNSEIKFADLFETAQHLGADVLATGHYVSSKAEADGGRALYRSLDSSRDQSYFLFATTNAQLELLRFPLGDLAKPDVRQMARQLGLVVADKADSQDICFVPSGKYSDVIERLSPGAVVPGEILHVDGRVLGRHSGVIHYTIGQRRGLGLGAVGAGAGEPLYVIRLDAAKAQVIVGPRQALATRRVHLRGVNWIGPGSLQDMDEHGLEIFVQVRSTRAPIPGFLHAHESEIWVDFALDEDGVSPGQACVFYENDQPRARVLGGGFISATESALQMREMFPKPPNEDLLDTNESSDLVSPKRSAC</sequence>
<comment type="function">
    <text evidence="1">Catalyzes the 2-thiolation of uridine at the wobble position (U34) of tRNA, leading to the formation of s(2)U34.</text>
</comment>
<comment type="catalytic activity">
    <reaction evidence="1">
        <text>S-sulfanyl-L-cysteinyl-[protein] + uridine(34) in tRNA + AH2 + ATP = 2-thiouridine(34) in tRNA + L-cysteinyl-[protein] + A + AMP + diphosphate + H(+)</text>
        <dbReference type="Rhea" id="RHEA:47032"/>
        <dbReference type="Rhea" id="RHEA-COMP:10131"/>
        <dbReference type="Rhea" id="RHEA-COMP:11726"/>
        <dbReference type="Rhea" id="RHEA-COMP:11727"/>
        <dbReference type="Rhea" id="RHEA-COMP:11728"/>
        <dbReference type="ChEBI" id="CHEBI:13193"/>
        <dbReference type="ChEBI" id="CHEBI:15378"/>
        <dbReference type="ChEBI" id="CHEBI:17499"/>
        <dbReference type="ChEBI" id="CHEBI:29950"/>
        <dbReference type="ChEBI" id="CHEBI:30616"/>
        <dbReference type="ChEBI" id="CHEBI:33019"/>
        <dbReference type="ChEBI" id="CHEBI:61963"/>
        <dbReference type="ChEBI" id="CHEBI:65315"/>
        <dbReference type="ChEBI" id="CHEBI:87170"/>
        <dbReference type="ChEBI" id="CHEBI:456215"/>
        <dbReference type="EC" id="2.8.1.13"/>
    </reaction>
</comment>
<comment type="subcellular location">
    <subcellularLocation>
        <location evidence="1">Cytoplasm</location>
    </subcellularLocation>
</comment>
<comment type="similarity">
    <text evidence="1">Belongs to the MnmA/TRMU family.</text>
</comment>
<name>MNMA_BEII9</name>
<accession>B2IBH3</accession>
<keyword id="KW-0067">ATP-binding</keyword>
<keyword id="KW-0963">Cytoplasm</keyword>
<keyword id="KW-1015">Disulfide bond</keyword>
<keyword id="KW-0547">Nucleotide-binding</keyword>
<keyword id="KW-1185">Reference proteome</keyword>
<keyword id="KW-0694">RNA-binding</keyword>
<keyword id="KW-0808">Transferase</keyword>
<keyword id="KW-0819">tRNA processing</keyword>
<keyword id="KW-0820">tRNA-binding</keyword>
<dbReference type="EC" id="2.8.1.13" evidence="1"/>
<dbReference type="EMBL" id="CP001016">
    <property type="protein sequence ID" value="ACB96599.1"/>
    <property type="molecule type" value="Genomic_DNA"/>
</dbReference>
<dbReference type="RefSeq" id="WP_012385948.1">
    <property type="nucleotide sequence ID" value="NC_010581.1"/>
</dbReference>
<dbReference type="SMR" id="B2IBH3"/>
<dbReference type="STRING" id="395963.Bind_3037"/>
<dbReference type="KEGG" id="bid:Bind_3037"/>
<dbReference type="eggNOG" id="COG0482">
    <property type="taxonomic scope" value="Bacteria"/>
</dbReference>
<dbReference type="HOGENOM" id="CLU_035188_0_1_5"/>
<dbReference type="OrthoDB" id="9800696at2"/>
<dbReference type="Proteomes" id="UP000001695">
    <property type="component" value="Chromosome"/>
</dbReference>
<dbReference type="GO" id="GO:0005737">
    <property type="term" value="C:cytoplasm"/>
    <property type="evidence" value="ECO:0007669"/>
    <property type="project" value="UniProtKB-SubCell"/>
</dbReference>
<dbReference type="GO" id="GO:0005524">
    <property type="term" value="F:ATP binding"/>
    <property type="evidence" value="ECO:0007669"/>
    <property type="project" value="UniProtKB-KW"/>
</dbReference>
<dbReference type="GO" id="GO:0000049">
    <property type="term" value="F:tRNA binding"/>
    <property type="evidence" value="ECO:0007669"/>
    <property type="project" value="UniProtKB-KW"/>
</dbReference>
<dbReference type="GO" id="GO:0103016">
    <property type="term" value="F:tRNA-uridine 2-sulfurtransferase activity"/>
    <property type="evidence" value="ECO:0007669"/>
    <property type="project" value="UniProtKB-EC"/>
</dbReference>
<dbReference type="GO" id="GO:0002143">
    <property type="term" value="P:tRNA wobble position uridine thiolation"/>
    <property type="evidence" value="ECO:0007669"/>
    <property type="project" value="TreeGrafter"/>
</dbReference>
<dbReference type="CDD" id="cd01998">
    <property type="entry name" value="MnmA_TRMU-like"/>
    <property type="match status" value="1"/>
</dbReference>
<dbReference type="FunFam" id="3.40.50.620:FF:000115">
    <property type="entry name" value="tRNA-specific 2-thiouridylase MnmA"/>
    <property type="match status" value="1"/>
</dbReference>
<dbReference type="Gene3D" id="2.30.30.280">
    <property type="entry name" value="Adenine nucleotide alpha hydrolases-like domains"/>
    <property type="match status" value="1"/>
</dbReference>
<dbReference type="Gene3D" id="3.40.50.620">
    <property type="entry name" value="HUPs"/>
    <property type="match status" value="1"/>
</dbReference>
<dbReference type="Gene3D" id="2.40.30.10">
    <property type="entry name" value="Translation factors"/>
    <property type="match status" value="1"/>
</dbReference>
<dbReference type="HAMAP" id="MF_00144">
    <property type="entry name" value="tRNA_thiouridyl_MnmA"/>
    <property type="match status" value="1"/>
</dbReference>
<dbReference type="InterPro" id="IPR004506">
    <property type="entry name" value="MnmA-like"/>
</dbReference>
<dbReference type="InterPro" id="IPR046885">
    <property type="entry name" value="MnmA-like_C"/>
</dbReference>
<dbReference type="InterPro" id="IPR046884">
    <property type="entry name" value="MnmA-like_central"/>
</dbReference>
<dbReference type="InterPro" id="IPR023382">
    <property type="entry name" value="MnmA-like_central_sf"/>
</dbReference>
<dbReference type="InterPro" id="IPR014729">
    <property type="entry name" value="Rossmann-like_a/b/a_fold"/>
</dbReference>
<dbReference type="NCBIfam" id="NF001138">
    <property type="entry name" value="PRK00143.1"/>
    <property type="match status" value="1"/>
</dbReference>
<dbReference type="NCBIfam" id="TIGR00420">
    <property type="entry name" value="trmU"/>
    <property type="match status" value="1"/>
</dbReference>
<dbReference type="PANTHER" id="PTHR11933:SF5">
    <property type="entry name" value="MITOCHONDRIAL TRNA-SPECIFIC 2-THIOURIDYLASE 1"/>
    <property type="match status" value="1"/>
</dbReference>
<dbReference type="PANTHER" id="PTHR11933">
    <property type="entry name" value="TRNA 5-METHYLAMINOMETHYL-2-THIOURIDYLATE -METHYLTRANSFERASE"/>
    <property type="match status" value="1"/>
</dbReference>
<dbReference type="Pfam" id="PF03054">
    <property type="entry name" value="tRNA_Me_trans"/>
    <property type="match status" value="1"/>
</dbReference>
<dbReference type="Pfam" id="PF20258">
    <property type="entry name" value="tRNA_Me_trans_C"/>
    <property type="match status" value="1"/>
</dbReference>
<dbReference type="Pfam" id="PF20259">
    <property type="entry name" value="tRNA_Me_trans_M"/>
    <property type="match status" value="1"/>
</dbReference>
<dbReference type="SUPFAM" id="SSF52402">
    <property type="entry name" value="Adenine nucleotide alpha hydrolases-like"/>
    <property type="match status" value="1"/>
</dbReference>
<organism>
    <name type="scientific">Beijerinckia indica subsp. indica (strain ATCC 9039 / DSM 1715 / NCIMB 8712)</name>
    <dbReference type="NCBI Taxonomy" id="395963"/>
    <lineage>
        <taxon>Bacteria</taxon>
        <taxon>Pseudomonadati</taxon>
        <taxon>Pseudomonadota</taxon>
        <taxon>Alphaproteobacteria</taxon>
        <taxon>Hyphomicrobiales</taxon>
        <taxon>Beijerinckiaceae</taxon>
        <taxon>Beijerinckia</taxon>
    </lineage>
</organism>
<proteinExistence type="inferred from homology"/>
<protein>
    <recommendedName>
        <fullName evidence="1">tRNA-specific 2-thiouridylase MnmA</fullName>
        <ecNumber evidence="1">2.8.1.13</ecNumber>
    </recommendedName>
</protein>
<feature type="chain" id="PRO_0000349537" description="tRNA-specific 2-thiouridylase MnmA">
    <location>
        <begin position="1"/>
        <end position="431"/>
    </location>
</feature>
<feature type="region of interest" description="Interaction with tRNA" evidence="1">
    <location>
        <begin position="176"/>
        <end position="178"/>
    </location>
</feature>
<feature type="region of interest" description="Disordered" evidence="2">
    <location>
        <begin position="407"/>
        <end position="431"/>
    </location>
</feature>
<feature type="active site" description="Nucleophile" evidence="1">
    <location>
        <position position="129"/>
    </location>
</feature>
<feature type="active site" description="Cysteine persulfide intermediate" evidence="1">
    <location>
        <position position="226"/>
    </location>
</feature>
<feature type="binding site" evidence="1">
    <location>
        <begin position="35"/>
        <end position="42"/>
    </location>
    <ligand>
        <name>ATP</name>
        <dbReference type="ChEBI" id="CHEBI:30616"/>
    </ligand>
</feature>
<feature type="binding site" evidence="1">
    <location>
        <position position="61"/>
    </location>
    <ligand>
        <name>ATP</name>
        <dbReference type="ChEBI" id="CHEBI:30616"/>
    </ligand>
</feature>
<feature type="binding site" evidence="1">
    <location>
        <position position="153"/>
    </location>
    <ligand>
        <name>ATP</name>
        <dbReference type="ChEBI" id="CHEBI:30616"/>
    </ligand>
</feature>
<feature type="site" description="Interaction with tRNA" evidence="1">
    <location>
        <position position="154"/>
    </location>
</feature>
<feature type="site" description="Interaction with tRNA" evidence="1">
    <location>
        <position position="373"/>
    </location>
</feature>
<feature type="disulfide bond" description="Alternate" evidence="1">
    <location>
        <begin position="129"/>
        <end position="226"/>
    </location>
</feature>